<evidence type="ECO:0000250" key="1">
    <source>
        <dbReference type="UniProtKB" id="A1XBS5"/>
    </source>
</evidence>
<evidence type="ECO:0000250" key="2">
    <source>
        <dbReference type="UniProtKB" id="Q8BP22"/>
    </source>
</evidence>
<evidence type="ECO:0000255" key="3"/>
<evidence type="ECO:0000256" key="4">
    <source>
        <dbReference type="SAM" id="MobiDB-lite"/>
    </source>
</evidence>
<evidence type="ECO:0000305" key="5"/>
<gene>
    <name evidence="1" type="primary">CIBAR1</name>
    <name type="synonym">FAM92A</name>
    <name type="synonym">FAM92A1</name>
</gene>
<proteinExistence type="evidence at transcript level"/>
<accession>Q3SZG6</accession>
<name>CBAR1_BOVIN</name>
<keyword id="KW-0966">Cell projection</keyword>
<keyword id="KW-0969">Cilium</keyword>
<keyword id="KW-0970">Cilium biogenesis/degradation</keyword>
<keyword id="KW-0175">Coiled coil</keyword>
<keyword id="KW-0963">Cytoplasm</keyword>
<keyword id="KW-0206">Cytoskeleton</keyword>
<keyword id="KW-0221">Differentiation</keyword>
<keyword id="KW-0282">Flagellum</keyword>
<keyword id="KW-0472">Membrane</keyword>
<keyword id="KW-0496">Mitochondrion</keyword>
<keyword id="KW-0999">Mitochondrion inner membrane</keyword>
<keyword id="KW-0539">Nucleus</keyword>
<keyword id="KW-1185">Reference proteome</keyword>
<keyword id="KW-0744">Spermatogenesis</keyword>
<keyword id="KW-0809">Transit peptide</keyword>
<comment type="function">
    <text evidence="1 2">Plays a critical role in regulating mitochondrial ultrastructure and function by maintaining the integrity of mitochondrial morphology, particularly the organization of cristae (By similarity). Preferentially binds to negatively charged phospholipids like cardiolipin and phosphatidylinositol 4,5-bisphosphate enhancing its interaction with mitochondrial membranes (By similarity). Induces membrane curvature and tubulation, which are critical for maintaining mitochondrial ultrastructure and the organization of cristae (By similarity). Plays a crucial role in ciliogenesis (By similarity). May play a role in limb development through its role in ciliogenesis (By similarity). Plays a key role in the correct positioning of the annulus, a septin-based ring structure in the sperm flagellum, serving both as a physical barrier and a membrane diffusion barrier that separates the midpiece (MP) from the principal piece (PP) (By similarity). This positioning is essential for proper sperm motility and function (By similarity). Interacts with CBY3 to form a complex which localizes to the curved membrane region of the flagellar pocket (By similarity). By doing so, may provide stability and rigidity to the periannular membrane to prevent membrane deformation (By similarity). This function is crucial for halting annulus migration at the proximal end of the fibrous sheath-containing PP (By similarity).</text>
</comment>
<comment type="subunit">
    <text evidence="1">Homodimer (via BAR-like domain). Heterodimer with FAM92B (via BAR-like domains). Interacts (via BAR-like domain) with CBY1; this interaction is required for targeting FAM92A to centriole and cilium basal body. Interacts (via BAR-like domain) with CBY3; both proteins form a ninefold symmetric structure at the flagellar base; are recruited to the annulus in a mutually dependent manner and regulate annulus positionning.</text>
</comment>
<comment type="subcellular location">
    <subcellularLocation>
        <location evidence="1">Cytoplasm</location>
    </subcellularLocation>
    <subcellularLocation>
        <location evidence="1">Cytoplasm</location>
        <location evidence="1">Cytoskeleton</location>
        <location evidence="1">Microtubule organizing center</location>
        <location evidence="1">Centrosome</location>
        <location evidence="1">Centriole</location>
    </subcellularLocation>
    <subcellularLocation>
        <location evidence="1">Cytoplasm</location>
        <location evidence="1">Cytoskeleton</location>
        <location evidence="1">Cilium basal body</location>
    </subcellularLocation>
    <subcellularLocation>
        <location evidence="2">Cell projection</location>
        <location evidence="2">Cilium</location>
    </subcellularLocation>
    <subcellularLocation>
        <location evidence="1">Nucleus</location>
    </subcellularLocation>
    <subcellularLocation>
        <location evidence="1">Mitochondrion inner membrane</location>
        <topology evidence="1">Peripheral membrane protein</topology>
        <orientation evidence="1">Matrix side</orientation>
    </subcellularLocation>
    <subcellularLocation>
        <location evidence="2">Cell projection</location>
        <location evidence="2">Cilium</location>
        <location evidence="2">Flagellum</location>
    </subcellularLocation>
    <text evidence="1 2">Weak punctate vesicular distribution throughout the cytoplasm. Localizes at the distal end of mother centrioles. Extensive colocalization with CBY1 at mother centrioles. Localizes to the annulus at the junction between the midpiece (MP) and principal piece (PP) of the sperm flagellum.</text>
</comment>
<comment type="domain">
    <text evidence="1">The BAR-like domain displays limited similarity to other BAR domains.</text>
</comment>
<comment type="similarity">
    <text evidence="5">Belongs to the CIBAR family.</text>
</comment>
<sequence length="288" mass="33524">MLRRSLENRDAQTRQLQDAVTNVEKHFGELCQIFAAYVRKTARLRDKADLLVNEINVYASTETPHLKQGLKNFADEFAKLQDYRQAEVERLEAKVVEPLKAYGTIVKMKRDDLKATLTARNREAKQLTQLERTRQRNPSDRHVISQAETELQRATMDATRTTRHLEETIDNFEKQKIKDIKTIFSEFITIEMLFHGKALEVYTAAYQNIQKIDEEEDLEVFRHSLYPQDYSSRLDIVRANSKSPLQRSLSAKCVSGTGQVLTCRLRKDHQTEDDDEEDEDLDVTEEEN</sequence>
<organism>
    <name type="scientific">Bos taurus</name>
    <name type="common">Bovine</name>
    <dbReference type="NCBI Taxonomy" id="9913"/>
    <lineage>
        <taxon>Eukaryota</taxon>
        <taxon>Metazoa</taxon>
        <taxon>Chordata</taxon>
        <taxon>Craniata</taxon>
        <taxon>Vertebrata</taxon>
        <taxon>Euteleostomi</taxon>
        <taxon>Mammalia</taxon>
        <taxon>Eutheria</taxon>
        <taxon>Laurasiatheria</taxon>
        <taxon>Artiodactyla</taxon>
        <taxon>Ruminantia</taxon>
        <taxon>Pecora</taxon>
        <taxon>Bovidae</taxon>
        <taxon>Bovinae</taxon>
        <taxon>Bos</taxon>
    </lineage>
</organism>
<protein>
    <recommendedName>
        <fullName evidence="1">CBY1-interacting BAR domain-containing protein 1</fullName>
    </recommendedName>
</protein>
<feature type="transit peptide" description="Mitochondrion" evidence="1">
    <location>
        <begin position="1"/>
        <end position="47"/>
    </location>
</feature>
<feature type="chain" id="PRO_0000287079" description="CBY1-interacting BAR domain-containing protein 1">
    <location>
        <begin position="48"/>
        <end position="288"/>
    </location>
</feature>
<feature type="region of interest" description="BAR-like" evidence="1">
    <location>
        <begin position="10"/>
        <end position="220"/>
    </location>
</feature>
<feature type="region of interest" description="Disordered" evidence="4">
    <location>
        <begin position="266"/>
        <end position="288"/>
    </location>
</feature>
<feature type="coiled-coil region" evidence="3">
    <location>
        <begin position="107"/>
        <end position="176"/>
    </location>
</feature>
<feature type="compositionally biased region" description="Acidic residues" evidence="4">
    <location>
        <begin position="271"/>
        <end position="288"/>
    </location>
</feature>
<dbReference type="EMBL" id="BC102866">
    <property type="protein sequence ID" value="AAI02867.1"/>
    <property type="molecule type" value="mRNA"/>
</dbReference>
<dbReference type="RefSeq" id="NP_001030519.1">
    <property type="nucleotide sequence ID" value="NM_001035442.2"/>
</dbReference>
<dbReference type="SMR" id="Q3SZG6"/>
<dbReference type="FunCoup" id="Q3SZG6">
    <property type="interactions" value="589"/>
</dbReference>
<dbReference type="STRING" id="9913.ENSBTAP00000017833"/>
<dbReference type="PaxDb" id="9913-ENSBTAP00000016972"/>
<dbReference type="Ensembl" id="ENSBTAT00000017833.7">
    <property type="protein sequence ID" value="ENSBTAP00000017833.7"/>
    <property type="gene ID" value="ENSBTAG00000013405.7"/>
</dbReference>
<dbReference type="GeneID" id="614070"/>
<dbReference type="KEGG" id="bta:614070"/>
<dbReference type="CTD" id="137392"/>
<dbReference type="VEuPathDB" id="HostDB:ENSBTAG00000013405"/>
<dbReference type="eggNOG" id="ENOG502QQ0N">
    <property type="taxonomic scope" value="Eukaryota"/>
</dbReference>
<dbReference type="GeneTree" id="ENSGT00390000010285"/>
<dbReference type="InParanoid" id="Q3SZG6"/>
<dbReference type="OrthoDB" id="60621at2759"/>
<dbReference type="Proteomes" id="UP000009136">
    <property type="component" value="Chromosome 14"/>
</dbReference>
<dbReference type="Bgee" id="ENSBTAG00000013405">
    <property type="expression patterns" value="Expressed in spermatid and 111 other cell types or tissues"/>
</dbReference>
<dbReference type="GO" id="GO:0005814">
    <property type="term" value="C:centriole"/>
    <property type="evidence" value="ECO:0007669"/>
    <property type="project" value="UniProtKB-SubCell"/>
</dbReference>
<dbReference type="GO" id="GO:0036064">
    <property type="term" value="C:ciliary basal body"/>
    <property type="evidence" value="ECO:0000318"/>
    <property type="project" value="GO_Central"/>
</dbReference>
<dbReference type="GO" id="GO:0097546">
    <property type="term" value="C:ciliary base"/>
    <property type="evidence" value="ECO:0000250"/>
    <property type="project" value="UniProtKB"/>
</dbReference>
<dbReference type="GO" id="GO:0035869">
    <property type="term" value="C:ciliary transition zone"/>
    <property type="evidence" value="ECO:0000250"/>
    <property type="project" value="UniProtKB"/>
</dbReference>
<dbReference type="GO" id="GO:0005929">
    <property type="term" value="C:cilium"/>
    <property type="evidence" value="ECO:0000250"/>
    <property type="project" value="UniProtKB"/>
</dbReference>
<dbReference type="GO" id="GO:0005737">
    <property type="term" value="C:cytoplasm"/>
    <property type="evidence" value="ECO:0000250"/>
    <property type="project" value="UniProtKB"/>
</dbReference>
<dbReference type="GO" id="GO:0005743">
    <property type="term" value="C:mitochondrial inner membrane"/>
    <property type="evidence" value="ECO:0000250"/>
    <property type="project" value="UniProtKB"/>
</dbReference>
<dbReference type="GO" id="GO:0005634">
    <property type="term" value="C:nucleus"/>
    <property type="evidence" value="ECO:0000250"/>
    <property type="project" value="UniProtKB"/>
</dbReference>
<dbReference type="GO" id="GO:0097227">
    <property type="term" value="C:sperm annulus"/>
    <property type="evidence" value="ECO:0000250"/>
    <property type="project" value="UniProtKB"/>
</dbReference>
<dbReference type="GO" id="GO:0060271">
    <property type="term" value="P:cilium assembly"/>
    <property type="evidence" value="ECO:0000250"/>
    <property type="project" value="UniProtKB"/>
</dbReference>
<dbReference type="GO" id="GO:0007007">
    <property type="term" value="P:inner mitochondrial membrane organization"/>
    <property type="evidence" value="ECO:0000250"/>
    <property type="project" value="UniProtKB"/>
</dbReference>
<dbReference type="GO" id="GO:0035108">
    <property type="term" value="P:limb morphogenesis"/>
    <property type="evidence" value="ECO:0000250"/>
    <property type="project" value="UniProtKB"/>
</dbReference>
<dbReference type="GO" id="GO:0045880">
    <property type="term" value="P:positive regulation of smoothened signaling pathway"/>
    <property type="evidence" value="ECO:0000250"/>
    <property type="project" value="UniProtKB"/>
</dbReference>
<dbReference type="GO" id="GO:0007283">
    <property type="term" value="P:spermatogenesis"/>
    <property type="evidence" value="ECO:0000250"/>
    <property type="project" value="UniProtKB"/>
</dbReference>
<dbReference type="CDD" id="cd07598">
    <property type="entry name" value="BAR_FAM92"/>
    <property type="match status" value="1"/>
</dbReference>
<dbReference type="FunFam" id="1.20.1270.60:FF:000047">
    <property type="entry name" value="protein FAM92A isoform X1"/>
    <property type="match status" value="1"/>
</dbReference>
<dbReference type="Gene3D" id="1.20.1270.60">
    <property type="entry name" value="Arfaptin homology (AH) domain/BAR domain"/>
    <property type="match status" value="1"/>
</dbReference>
<dbReference type="InterPro" id="IPR027267">
    <property type="entry name" value="AH/BAR_dom_sf"/>
</dbReference>
<dbReference type="InterPro" id="IPR035590">
    <property type="entry name" value="BAR_CBAR1/2"/>
</dbReference>
<dbReference type="InterPro" id="IPR009602">
    <property type="entry name" value="CBAR/FAM92"/>
</dbReference>
<dbReference type="PANTHER" id="PTHR21223:SF4">
    <property type="entry name" value="CBY1-INTERACTING BAR DOMAIN-CONTAINING PROTEIN 1"/>
    <property type="match status" value="1"/>
</dbReference>
<dbReference type="PANTHER" id="PTHR21223">
    <property type="entry name" value="CBY1-INTERACTING BAR DOMAIN-CONTAINING PROTEIN HOMOLOG"/>
    <property type="match status" value="1"/>
</dbReference>
<dbReference type="Pfam" id="PF06730">
    <property type="entry name" value="FAM92"/>
    <property type="match status" value="1"/>
</dbReference>
<dbReference type="SUPFAM" id="SSF103657">
    <property type="entry name" value="BAR/IMD domain-like"/>
    <property type="match status" value="1"/>
</dbReference>
<reference key="1">
    <citation type="submission" date="2005-08" db="EMBL/GenBank/DDBJ databases">
        <authorList>
            <consortium name="NIH - Mammalian Gene Collection (MGC) project"/>
        </authorList>
    </citation>
    <scope>NUCLEOTIDE SEQUENCE [LARGE SCALE MRNA]</scope>
    <source>
        <strain>Crossbred X Angus</strain>
        <tissue>Liver</tissue>
    </source>
</reference>